<name>ECM14_SCLS1</name>
<gene>
    <name type="primary">ecm14</name>
    <name type="ORF">SS1G_08927</name>
</gene>
<accession>A7EUC0</accession>
<feature type="signal peptide" evidence="4">
    <location>
        <begin position="1"/>
        <end position="26"/>
    </location>
</feature>
<feature type="propeptide" id="PRO_0000453251" evidence="3">
    <location>
        <begin position="27"/>
        <end position="190"/>
    </location>
</feature>
<feature type="chain" id="PRO_0000411190" description="Inactive metallocarboxypeptidase ecm14">
    <location>
        <begin position="191"/>
        <end position="596"/>
    </location>
</feature>
<feature type="domain" description="Peptidase M14" evidence="5">
    <location>
        <begin position="220"/>
        <end position="540"/>
    </location>
</feature>
<feature type="binding site" evidence="1">
    <location>
        <begin position="285"/>
        <end position="288"/>
    </location>
    <ligand>
        <name>substrate</name>
    </ligand>
</feature>
<feature type="binding site" evidence="5">
    <location>
        <position position="285"/>
    </location>
    <ligand>
        <name>Zn(2+)</name>
        <dbReference type="ChEBI" id="CHEBI:29105"/>
        <note>catalytic</note>
    </ligand>
</feature>
<feature type="binding site" evidence="5">
    <location>
        <position position="288"/>
    </location>
    <ligand>
        <name>Zn(2+)</name>
        <dbReference type="ChEBI" id="CHEBI:29105"/>
        <note>catalytic</note>
    </ligand>
</feature>
<feature type="binding site" evidence="1">
    <location>
        <position position="343"/>
    </location>
    <ligand>
        <name>substrate</name>
    </ligand>
</feature>
<feature type="binding site" evidence="1">
    <location>
        <begin position="360"/>
        <end position="361"/>
    </location>
    <ligand>
        <name>substrate</name>
    </ligand>
</feature>
<feature type="binding site" evidence="5">
    <location>
        <position position="416"/>
    </location>
    <ligand>
        <name>Zn(2+)</name>
        <dbReference type="ChEBI" id="CHEBI:29105"/>
        <note>catalytic</note>
    </ligand>
</feature>
<feature type="binding site" evidence="1">
    <location>
        <begin position="417"/>
        <end position="418"/>
    </location>
    <ligand>
        <name>substrate</name>
    </ligand>
</feature>
<feature type="glycosylation site" description="N-linked (GlcNAc...) asparagine" evidence="4">
    <location>
        <position position="114"/>
    </location>
</feature>
<feature type="glycosylation site" description="N-linked (GlcNAc...) asparagine" evidence="4">
    <location>
        <position position="400"/>
    </location>
</feature>
<feature type="disulfide bond" evidence="2">
    <location>
        <begin position="354"/>
        <end position="376"/>
    </location>
</feature>
<proteinExistence type="inferred from homology"/>
<comment type="function">
    <text evidence="3">Inactive carboxypeptidase that may play a role in cell wall organization and biogenesis.</text>
</comment>
<comment type="cofactor">
    <cofactor evidence="1">
        <name>Zn(2+)</name>
        <dbReference type="ChEBI" id="CHEBI:29105"/>
    </cofactor>
    <text evidence="1">Binds 1 zinc ion per subunit.</text>
</comment>
<comment type="subcellular location">
    <subcellularLocation>
        <location evidence="3">Vacuole</location>
    </subcellularLocation>
    <subcellularLocation>
        <location evidence="3">Secreted</location>
    </subcellularLocation>
</comment>
<comment type="similarity">
    <text evidence="6">Belongs to the peptidase M14 family.</text>
</comment>
<comment type="caution">
    <text evidence="3">Lacks the conserved Glu residue in position 506 essential for carbopeptidase activity. The mature form lacks catalytic activity towards synthetic peptide substrates.</text>
</comment>
<sequence>MSQSHSILSSLILLVAIIFCVPHVIAVPWTTDGHAQLSPVTPRYPTQEPSGIRYRNVIPQLTWLCDTAIEKIFGLPPKVAKKPDVPGNVARPTNAQLPATLLAKYGGDVVLRFNLTTPAEEQALAEAADTLFLDIWEFTSNWADIRLREDDVPSLLGLLPKSLQNAYSHLMPDLAKSIYQSYPSMAYADAAFSSKHVERAFTPALRTSKVEGADNIFFQNYQPLSVIIPWMRLMSSMFSTHVRMINIGISYEGRDIPALRIGVSPNLPSEATKPRKTIILSGGFHAREWISVSSVTYAAWSLITSYGKSPAITKLLQEFDFVLVPTINVDGYVYTWENDRLWRKNRQQTNLRFCRGLDLDRGFGFEWGSSTQTNPCSESYPGDAPFQAVESHRFAEWAKNETENNNVHFVGFLDLHSYSQQVLYPYSYSCLADPPSLENLEELGIGLAKAIRISSGEQYTVASACEGAISSKIPGYSSTSRMEMGGGSAIDWFYHELGVRYSYQIKLRDTGSYGFLLPKENIVPTGEEVFNVIKYFGDFLLGDKGIEKAKSSEEEPITKPVKSELPLGVMEEESVISDEIEDEYEDINLELKRRRR</sequence>
<reference key="1">
    <citation type="journal article" date="2011" name="PLoS Genet.">
        <title>Genomic analysis of the necrotrophic fungal pathogens Sclerotinia sclerotiorum and Botrytis cinerea.</title>
        <authorList>
            <person name="Amselem J."/>
            <person name="Cuomo C.A."/>
            <person name="van Kan J.A.L."/>
            <person name="Viaud M."/>
            <person name="Benito E.P."/>
            <person name="Couloux A."/>
            <person name="Coutinho P.M."/>
            <person name="de Vries R.P."/>
            <person name="Dyer P.S."/>
            <person name="Fillinger S."/>
            <person name="Fournier E."/>
            <person name="Gout L."/>
            <person name="Hahn M."/>
            <person name="Kohn L."/>
            <person name="Lapalu N."/>
            <person name="Plummer K.M."/>
            <person name="Pradier J.-M."/>
            <person name="Quevillon E."/>
            <person name="Sharon A."/>
            <person name="Simon A."/>
            <person name="ten Have A."/>
            <person name="Tudzynski B."/>
            <person name="Tudzynski P."/>
            <person name="Wincker P."/>
            <person name="Andrew M."/>
            <person name="Anthouard V."/>
            <person name="Beever R.E."/>
            <person name="Beffa R."/>
            <person name="Benoit I."/>
            <person name="Bouzid O."/>
            <person name="Brault B."/>
            <person name="Chen Z."/>
            <person name="Choquer M."/>
            <person name="Collemare J."/>
            <person name="Cotton P."/>
            <person name="Danchin E.G."/>
            <person name="Da Silva C."/>
            <person name="Gautier A."/>
            <person name="Giraud C."/>
            <person name="Giraud T."/>
            <person name="Gonzalez C."/>
            <person name="Grossetete S."/>
            <person name="Gueldener U."/>
            <person name="Henrissat B."/>
            <person name="Howlett B.J."/>
            <person name="Kodira C."/>
            <person name="Kretschmer M."/>
            <person name="Lappartient A."/>
            <person name="Leroch M."/>
            <person name="Levis C."/>
            <person name="Mauceli E."/>
            <person name="Neuveglise C."/>
            <person name="Oeser B."/>
            <person name="Pearson M."/>
            <person name="Poulain J."/>
            <person name="Poussereau N."/>
            <person name="Quesneville H."/>
            <person name="Rascle C."/>
            <person name="Schumacher J."/>
            <person name="Segurens B."/>
            <person name="Sexton A."/>
            <person name="Silva E."/>
            <person name="Sirven C."/>
            <person name="Soanes D.M."/>
            <person name="Talbot N.J."/>
            <person name="Templeton M."/>
            <person name="Yandava C."/>
            <person name="Yarden O."/>
            <person name="Zeng Q."/>
            <person name="Rollins J.A."/>
            <person name="Lebrun M.-H."/>
            <person name="Dickman M."/>
        </authorList>
    </citation>
    <scope>NUCLEOTIDE SEQUENCE [LARGE SCALE GENOMIC DNA]</scope>
    <source>
        <strain>ATCC 18683 / 1980 / Ss-1</strain>
    </source>
</reference>
<protein>
    <recommendedName>
        <fullName evidence="6">Inactive metallocarboxypeptidase ecm14</fullName>
    </recommendedName>
</protein>
<keyword id="KW-0961">Cell wall biogenesis/degradation</keyword>
<keyword id="KW-1015">Disulfide bond</keyword>
<keyword id="KW-0325">Glycoprotein</keyword>
<keyword id="KW-0479">Metal-binding</keyword>
<keyword id="KW-1185">Reference proteome</keyword>
<keyword id="KW-0964">Secreted</keyword>
<keyword id="KW-0732">Signal</keyword>
<keyword id="KW-0926">Vacuole</keyword>
<keyword id="KW-0862">Zinc</keyword>
<organism>
    <name type="scientific">Sclerotinia sclerotiorum (strain ATCC 18683 / 1980 / Ss-1)</name>
    <name type="common">White mold</name>
    <name type="synonym">Whetzelinia sclerotiorum</name>
    <dbReference type="NCBI Taxonomy" id="665079"/>
    <lineage>
        <taxon>Eukaryota</taxon>
        <taxon>Fungi</taxon>
        <taxon>Dikarya</taxon>
        <taxon>Ascomycota</taxon>
        <taxon>Pezizomycotina</taxon>
        <taxon>Leotiomycetes</taxon>
        <taxon>Helotiales</taxon>
        <taxon>Sclerotiniaceae</taxon>
        <taxon>Sclerotinia</taxon>
    </lineage>
</organism>
<dbReference type="EMBL" id="CH476632">
    <property type="protein sequence ID" value="EDN93062.1"/>
    <property type="molecule type" value="Genomic_DNA"/>
</dbReference>
<dbReference type="RefSeq" id="XP_001590163.1">
    <property type="nucleotide sequence ID" value="XM_001590113.1"/>
</dbReference>
<dbReference type="SMR" id="A7EUC0"/>
<dbReference type="FunCoup" id="A7EUC0">
    <property type="interactions" value="783"/>
</dbReference>
<dbReference type="GlyCosmos" id="A7EUC0">
    <property type="glycosylation" value="2 sites, No reported glycans"/>
</dbReference>
<dbReference type="GeneID" id="5486328"/>
<dbReference type="KEGG" id="ssl:SS1G_08927"/>
<dbReference type="VEuPathDB" id="FungiDB:sscle_14g100610"/>
<dbReference type="InParanoid" id="A7EUC0"/>
<dbReference type="OMA" id="WFYHQLH"/>
<dbReference type="OrthoDB" id="3626597at2759"/>
<dbReference type="Proteomes" id="UP000001312">
    <property type="component" value="Unassembled WGS sequence"/>
</dbReference>
<dbReference type="GO" id="GO:0005615">
    <property type="term" value="C:extracellular space"/>
    <property type="evidence" value="ECO:0000318"/>
    <property type="project" value="GO_Central"/>
</dbReference>
<dbReference type="GO" id="GO:0005773">
    <property type="term" value="C:vacuole"/>
    <property type="evidence" value="ECO:0007669"/>
    <property type="project" value="UniProtKB-SubCell"/>
</dbReference>
<dbReference type="GO" id="GO:0008270">
    <property type="term" value="F:zinc ion binding"/>
    <property type="evidence" value="ECO:0007669"/>
    <property type="project" value="InterPro"/>
</dbReference>
<dbReference type="GO" id="GO:0071555">
    <property type="term" value="P:cell wall organization"/>
    <property type="evidence" value="ECO:0007669"/>
    <property type="project" value="UniProtKB-KW"/>
</dbReference>
<dbReference type="CDD" id="cd03860">
    <property type="entry name" value="M14_CP_A-B_like"/>
    <property type="match status" value="1"/>
</dbReference>
<dbReference type="FunFam" id="3.40.630.10:FF:000060">
    <property type="entry name" value="Putative metallocarboxypeptidase ecm14"/>
    <property type="match status" value="1"/>
</dbReference>
<dbReference type="Gene3D" id="3.40.630.10">
    <property type="entry name" value="Zn peptidases"/>
    <property type="match status" value="1"/>
</dbReference>
<dbReference type="InterPro" id="IPR000834">
    <property type="entry name" value="Peptidase_M14"/>
</dbReference>
<dbReference type="PANTHER" id="PTHR11705:SF147">
    <property type="entry name" value="INACTIVE METALLOCARBOXYPEPTIDASE ECM14"/>
    <property type="match status" value="1"/>
</dbReference>
<dbReference type="PANTHER" id="PTHR11705">
    <property type="entry name" value="PROTEASE FAMILY M14 CARBOXYPEPTIDASE A,B"/>
    <property type="match status" value="1"/>
</dbReference>
<dbReference type="Pfam" id="PF00246">
    <property type="entry name" value="Peptidase_M14"/>
    <property type="match status" value="1"/>
</dbReference>
<dbReference type="PRINTS" id="PR00765">
    <property type="entry name" value="CRBOXYPTASEA"/>
</dbReference>
<dbReference type="SMART" id="SM00631">
    <property type="entry name" value="Zn_pept"/>
    <property type="match status" value="1"/>
</dbReference>
<dbReference type="SUPFAM" id="SSF53187">
    <property type="entry name" value="Zn-dependent exopeptidases"/>
    <property type="match status" value="1"/>
</dbReference>
<dbReference type="PROSITE" id="PS00132">
    <property type="entry name" value="CARBOXYPEPT_ZN_1"/>
    <property type="match status" value="1"/>
</dbReference>
<dbReference type="PROSITE" id="PS52035">
    <property type="entry name" value="PEPTIDASE_M14"/>
    <property type="match status" value="1"/>
</dbReference>
<evidence type="ECO:0000250" key="1">
    <source>
        <dbReference type="UniProtKB" id="P00730"/>
    </source>
</evidence>
<evidence type="ECO:0000250" key="2">
    <source>
        <dbReference type="UniProtKB" id="P15085"/>
    </source>
</evidence>
<evidence type="ECO:0000250" key="3">
    <source>
        <dbReference type="UniProtKB" id="P38836"/>
    </source>
</evidence>
<evidence type="ECO:0000255" key="4"/>
<evidence type="ECO:0000255" key="5">
    <source>
        <dbReference type="PROSITE-ProRule" id="PRU01379"/>
    </source>
</evidence>
<evidence type="ECO:0000305" key="6"/>